<dbReference type="EMBL" id="AY673996">
    <property type="protein sequence ID" value="AAT79779.1"/>
    <property type="molecule type" value="Genomic_DNA"/>
</dbReference>
<dbReference type="RefSeq" id="YP_063704.1">
    <property type="nucleotide sequence ID" value="NC_006137.1"/>
</dbReference>
<dbReference type="SMR" id="Q6B8K6"/>
<dbReference type="GeneID" id="2943973"/>
<dbReference type="GO" id="GO:0009535">
    <property type="term" value="C:chloroplast thylakoid membrane"/>
    <property type="evidence" value="ECO:0007669"/>
    <property type="project" value="UniProtKB-SubCell"/>
</dbReference>
<dbReference type="GO" id="GO:0009539">
    <property type="term" value="C:photosystem II reaction center"/>
    <property type="evidence" value="ECO:0007669"/>
    <property type="project" value="InterPro"/>
</dbReference>
<dbReference type="GO" id="GO:0015979">
    <property type="term" value="P:photosynthesis"/>
    <property type="evidence" value="ECO:0007669"/>
    <property type="project" value="UniProtKB-UniRule"/>
</dbReference>
<dbReference type="HAMAP" id="MF_01317">
    <property type="entry name" value="PSII_PsbL"/>
    <property type="match status" value="1"/>
</dbReference>
<dbReference type="InterPro" id="IPR003372">
    <property type="entry name" value="PSII_PsbL"/>
</dbReference>
<dbReference type="InterPro" id="IPR037266">
    <property type="entry name" value="PSII_PsbL_sf"/>
</dbReference>
<dbReference type="NCBIfam" id="NF001972">
    <property type="entry name" value="PRK00753.1"/>
    <property type="match status" value="1"/>
</dbReference>
<dbReference type="Pfam" id="PF02419">
    <property type="entry name" value="PsbL"/>
    <property type="match status" value="1"/>
</dbReference>
<dbReference type="SUPFAM" id="SSF161017">
    <property type="entry name" value="Photosystem II reaction center protein L, PsbL"/>
    <property type="match status" value="1"/>
</dbReference>
<keyword id="KW-0150">Chloroplast</keyword>
<keyword id="KW-0472">Membrane</keyword>
<keyword id="KW-0602">Photosynthesis</keyword>
<keyword id="KW-0604">Photosystem II</keyword>
<keyword id="KW-0934">Plastid</keyword>
<keyword id="KW-0674">Reaction center</keyword>
<keyword id="KW-0793">Thylakoid</keyword>
<keyword id="KW-0812">Transmembrane</keyword>
<keyword id="KW-1133">Transmembrane helix</keyword>
<name>PSBL_GRATL</name>
<comment type="function">
    <text evidence="1">One of the components of the core complex of photosystem II (PSII). PSII is a light-driven water:plastoquinone oxidoreductase that uses light energy to abstract electrons from H(2)O, generating O(2) and a proton gradient subsequently used for ATP formation. It consists of a core antenna complex that captures photons, and an electron transfer chain that converts photonic excitation into a charge separation. This subunit is found at the monomer-monomer interface and is required for correct PSII assembly and/or dimerization.</text>
</comment>
<comment type="subunit">
    <text evidence="1">PSII is composed of 1 copy each of membrane proteins PsbA, PsbB, PsbC, PsbD, PsbE, PsbF, PsbH, PsbI, PsbJ, PsbK, PsbL, PsbM, PsbT, PsbX, PsbY, PsbZ, Psb30/Ycf12, at least 3 peripheral proteins of the oxygen-evolving complex and a large number of cofactors. It forms dimeric complexes.</text>
</comment>
<comment type="subcellular location">
    <subcellularLocation>
        <location evidence="1">Plastid</location>
        <location evidence="1">Chloroplast thylakoid membrane</location>
        <topology evidence="1">Single-pass membrane protein</topology>
    </subcellularLocation>
</comment>
<comment type="similarity">
    <text evidence="1">Belongs to the PsbL family.</text>
</comment>
<proteinExistence type="inferred from homology"/>
<feature type="chain" id="PRO_0000219716" description="Photosystem II reaction center protein L">
    <location>
        <begin position="1"/>
        <end position="38"/>
    </location>
</feature>
<feature type="transmembrane region" description="Helical" evidence="1">
    <location>
        <begin position="17"/>
        <end position="37"/>
    </location>
</feature>
<gene>
    <name evidence="1" type="primary">psbL</name>
    <name type="ordered locus">Grc000198</name>
</gene>
<reference key="1">
    <citation type="journal article" date="2004" name="J. Mol. Evol.">
        <title>Comparative analysis of the complete plastid genome sequence of the red alga Gracilaria tenuistipitata var. liui provides insights into the evolution of rhodoplasts and their relationship to other plastids.</title>
        <authorList>
            <person name="Hagopian J.C."/>
            <person name="Reis M."/>
            <person name="Kitajima J.P."/>
            <person name="Bhattacharya D."/>
            <person name="de Oliveira M.C."/>
        </authorList>
    </citation>
    <scope>NUCLEOTIDE SEQUENCE [LARGE SCALE GENOMIC DNA]</scope>
</reference>
<geneLocation type="chloroplast"/>
<organism>
    <name type="scientific">Gracilaria tenuistipitata var. liui</name>
    <name type="common">Red alga</name>
    <dbReference type="NCBI Taxonomy" id="285951"/>
    <lineage>
        <taxon>Eukaryota</taxon>
        <taxon>Rhodophyta</taxon>
        <taxon>Florideophyceae</taxon>
        <taxon>Rhodymeniophycidae</taxon>
        <taxon>Gracilariales</taxon>
        <taxon>Gracilariaceae</taxon>
        <taxon>Gracilaria</taxon>
        <taxon>Gracilaria tenuistipitata</taxon>
    </lineage>
</organism>
<accession>Q6B8K6</accession>
<sequence length="38" mass="4362">MSGPNPNKEPVELNRTSLFWGLLLIFVLAVLFSSYFFN</sequence>
<evidence type="ECO:0000255" key="1">
    <source>
        <dbReference type="HAMAP-Rule" id="MF_01317"/>
    </source>
</evidence>
<protein>
    <recommendedName>
        <fullName evidence="1">Photosystem II reaction center protein L</fullName>
        <shortName evidence="1">PSII-L</shortName>
    </recommendedName>
</protein>